<gene>
    <name evidence="9" type="primary">DAP</name>
    <name evidence="7" type="synonym">DAP1</name>
</gene>
<keyword id="KW-0007">Acetylation</keyword>
<keyword id="KW-0053">Apoptosis</keyword>
<keyword id="KW-0072">Autophagy</keyword>
<keyword id="KW-0903">Direct protein sequencing</keyword>
<keyword id="KW-0597">Phosphoprotein</keyword>
<keyword id="KW-1267">Proteomics identification</keyword>
<keyword id="KW-1185">Reference proteome</keyword>
<keyword id="KW-0810">Translation regulation</keyword>
<protein>
    <recommendedName>
        <fullName evidence="7">Death-associated protein 1</fullName>
        <shortName evidence="7">DAP-1</shortName>
    </recommendedName>
</protein>
<organism>
    <name type="scientific">Homo sapiens</name>
    <name type="common">Human</name>
    <dbReference type="NCBI Taxonomy" id="9606"/>
    <lineage>
        <taxon>Eukaryota</taxon>
        <taxon>Metazoa</taxon>
        <taxon>Chordata</taxon>
        <taxon>Craniata</taxon>
        <taxon>Vertebrata</taxon>
        <taxon>Euteleostomi</taxon>
        <taxon>Mammalia</taxon>
        <taxon>Eutheria</taxon>
        <taxon>Euarchontoglires</taxon>
        <taxon>Primates</taxon>
        <taxon>Haplorrhini</taxon>
        <taxon>Catarrhini</taxon>
        <taxon>Hominidae</taxon>
        <taxon>Homo</taxon>
    </lineage>
</organism>
<proteinExistence type="evidence at protein level"/>
<name>DAP1_HUMAN</name>
<comment type="function">
    <text evidence="2 5 6">Ribosome-binding protein involved in ribosome hibernation, a process during which ribosomes are stabilized in an inactive state and preserved from proteasomal degradation (By similarity). Acts via its association with eiF5a (EIF5A and EIF5A2) at the polypeptide exit tunnel of the ribosome, preventing mRNA translation (By similarity). Involved in ribosome hibernation in the mature oocyte by preventing mRNA translation, leading to ribosome inactivation (By similarity). Ribosomes, which are produced in large quantities during oogenesis, are stored and translationally repressed in the oocyte and early embryo (By similarity). Also acts as a negative regulator of autophagy (PubMed:20537536). Involved in mediating interferon-gamma-induced cell death (PubMed:7828849).</text>
</comment>
<comment type="subunit">
    <text evidence="2">Associates with ribosomes; inhibiting translation (By similarity). Interacts with eiF5a (EIF5A and EIF5A2); inhibiting translation (By similarity).</text>
</comment>
<comment type="PTM">
    <text evidence="4 5">Phosphorylated. Phosphorylation by MTOR inhibits the suppressive activity of DAP toward autophagy.</text>
</comment>
<comment type="similarity">
    <text evidence="8">Belongs to the DAP-DAPL1 family.</text>
</comment>
<feature type="initiator methionine" description="Removed" evidence="4">
    <location>
        <position position="1"/>
    </location>
</feature>
<feature type="chain" id="PRO_0000079782" description="Death-associated protein 1">
    <location>
        <begin position="2"/>
        <end position="102"/>
    </location>
</feature>
<feature type="region of interest" description="Disordered" evidence="3">
    <location>
        <begin position="1"/>
        <end position="102"/>
    </location>
</feature>
<feature type="compositionally biased region" description="Basic and acidic residues" evidence="3">
    <location>
        <begin position="32"/>
        <end position="43"/>
    </location>
</feature>
<feature type="compositionally biased region" description="Polar residues" evidence="3">
    <location>
        <begin position="92"/>
        <end position="102"/>
    </location>
</feature>
<feature type="modified residue" description="N-acetylserine" evidence="4">
    <location>
        <position position="2"/>
    </location>
</feature>
<feature type="modified residue" description="Phosphoserine; by MTOR" evidence="4 5">
    <location>
        <position position="3"/>
    </location>
</feature>
<feature type="modified residue" description="N6-acetyllysine" evidence="1">
    <location>
        <position position="29"/>
    </location>
</feature>
<feature type="modified residue" description="Phosphoserine" evidence="4 10 11">
    <location>
        <position position="49"/>
    </location>
</feature>
<feature type="modified residue" description="Phosphoserine; by MTOR" evidence="4 5 10 11 12">
    <location>
        <position position="51"/>
    </location>
</feature>
<feature type="modified residue" description="Phosphoserine" evidence="10 11">
    <location>
        <position position="91"/>
    </location>
</feature>
<dbReference type="EMBL" id="X76105">
    <property type="protein sequence ID" value="CAA53713.1"/>
    <property type="molecule type" value="mRNA"/>
</dbReference>
<dbReference type="EMBL" id="CR542184">
    <property type="protein sequence ID" value="CAG46981.1"/>
    <property type="molecule type" value="mRNA"/>
</dbReference>
<dbReference type="EMBL" id="AY266680">
    <property type="protein sequence ID" value="AAO89078.1"/>
    <property type="molecule type" value="Genomic_DNA"/>
</dbReference>
<dbReference type="EMBL" id="BC002726">
    <property type="protein sequence ID" value="AAH02726.2"/>
    <property type="molecule type" value="mRNA"/>
</dbReference>
<dbReference type="CCDS" id="CCDS3880.1"/>
<dbReference type="PIR" id="I37274">
    <property type="entry name" value="I37274"/>
</dbReference>
<dbReference type="RefSeq" id="NP_001278892.1">
    <property type="nucleotide sequence ID" value="NM_001291963.1"/>
</dbReference>
<dbReference type="RefSeq" id="NP_004385.1">
    <property type="nucleotide sequence ID" value="NM_004394.3"/>
</dbReference>
<dbReference type="SMR" id="P51397"/>
<dbReference type="BioGRID" id="107981">
    <property type="interactions" value="11"/>
</dbReference>
<dbReference type="FunCoup" id="P51397">
    <property type="interactions" value="364"/>
</dbReference>
<dbReference type="IntAct" id="P51397">
    <property type="interactions" value="8"/>
</dbReference>
<dbReference type="MINT" id="P51397"/>
<dbReference type="STRING" id="9606.ENSP00000394163"/>
<dbReference type="GlyGen" id="P51397">
    <property type="glycosylation" value="1 site, 1 O-linked glycan (1 site)"/>
</dbReference>
<dbReference type="iPTMnet" id="P51397"/>
<dbReference type="PhosphoSitePlus" id="P51397"/>
<dbReference type="BioMuta" id="DAP"/>
<dbReference type="DMDM" id="1706298"/>
<dbReference type="jPOST" id="P51397"/>
<dbReference type="MassIVE" id="P51397"/>
<dbReference type="PaxDb" id="9606-ENSP00000230895"/>
<dbReference type="PeptideAtlas" id="P51397"/>
<dbReference type="ProteomicsDB" id="56302"/>
<dbReference type="Pumba" id="P51397"/>
<dbReference type="TopDownProteomics" id="P51397"/>
<dbReference type="Antibodypedia" id="9394">
    <property type="antibodies" value="265 antibodies from 36 providers"/>
</dbReference>
<dbReference type="DNASU" id="1611"/>
<dbReference type="Ensembl" id="ENST00000230895.11">
    <property type="protein sequence ID" value="ENSP00000230895.7"/>
    <property type="gene ID" value="ENSG00000112977.16"/>
</dbReference>
<dbReference type="GeneID" id="1611"/>
<dbReference type="KEGG" id="hsa:1611"/>
<dbReference type="MANE-Select" id="ENST00000230895.11">
    <property type="protein sequence ID" value="ENSP00000230895.7"/>
    <property type="RefSeq nucleotide sequence ID" value="NM_004394.3"/>
    <property type="RefSeq protein sequence ID" value="NP_004385.1"/>
</dbReference>
<dbReference type="UCSC" id="uc003jez.5">
    <property type="organism name" value="human"/>
</dbReference>
<dbReference type="AGR" id="HGNC:2672"/>
<dbReference type="CTD" id="1611"/>
<dbReference type="DisGeNET" id="1611"/>
<dbReference type="GeneCards" id="DAP"/>
<dbReference type="HGNC" id="HGNC:2672">
    <property type="gene designation" value="DAP"/>
</dbReference>
<dbReference type="HPA" id="ENSG00000112977">
    <property type="expression patterns" value="Low tissue specificity"/>
</dbReference>
<dbReference type="MIM" id="600954">
    <property type="type" value="gene"/>
</dbReference>
<dbReference type="neXtProt" id="NX_P51397"/>
<dbReference type="OpenTargets" id="ENSG00000112977"/>
<dbReference type="PharmGKB" id="PA27140"/>
<dbReference type="VEuPathDB" id="HostDB:ENSG00000112977"/>
<dbReference type="eggNOG" id="ENOG502S4ST">
    <property type="taxonomic scope" value="Eukaryota"/>
</dbReference>
<dbReference type="GeneTree" id="ENSGT00940000154574"/>
<dbReference type="HOGENOM" id="CLU_150759_2_0_1"/>
<dbReference type="InParanoid" id="P51397"/>
<dbReference type="OMA" id="QKHPHAP"/>
<dbReference type="OrthoDB" id="5973225at2759"/>
<dbReference type="PAN-GO" id="P51397">
    <property type="GO annotations" value="4 GO annotations based on evolutionary models"/>
</dbReference>
<dbReference type="PhylomeDB" id="P51397"/>
<dbReference type="TreeFam" id="TF329716"/>
<dbReference type="PathwayCommons" id="P51397"/>
<dbReference type="SignaLink" id="P51397"/>
<dbReference type="SIGNOR" id="P51397"/>
<dbReference type="BioGRID-ORCS" id="1611">
    <property type="hits" value="85 hits in 1156 CRISPR screens"/>
</dbReference>
<dbReference type="ChiTaRS" id="DAP">
    <property type="organism name" value="human"/>
</dbReference>
<dbReference type="GeneWiki" id="DAP_(gene)"/>
<dbReference type="GenomeRNAi" id="1611"/>
<dbReference type="Pharos" id="P51397">
    <property type="development level" value="Tbio"/>
</dbReference>
<dbReference type="PRO" id="PR:P51397"/>
<dbReference type="Proteomes" id="UP000005640">
    <property type="component" value="Chromosome 5"/>
</dbReference>
<dbReference type="RNAct" id="P51397">
    <property type="molecule type" value="protein"/>
</dbReference>
<dbReference type="Bgee" id="ENSG00000112977">
    <property type="expression patterns" value="Expressed in body of pancreas and 174 other cell types or tissues"/>
</dbReference>
<dbReference type="ExpressionAtlas" id="P51397">
    <property type="expression patterns" value="baseline and differential"/>
</dbReference>
<dbReference type="GO" id="GO:0043022">
    <property type="term" value="F:ribosome binding"/>
    <property type="evidence" value="ECO:0000318"/>
    <property type="project" value="GO_Central"/>
</dbReference>
<dbReference type="GO" id="GO:0006915">
    <property type="term" value="P:apoptotic process"/>
    <property type="evidence" value="ECO:0000316"/>
    <property type="project" value="MGI"/>
</dbReference>
<dbReference type="GO" id="GO:0097190">
    <property type="term" value="P:apoptotic signaling pathway"/>
    <property type="evidence" value="ECO:0000315"/>
    <property type="project" value="UniProtKB"/>
</dbReference>
<dbReference type="GO" id="GO:0006914">
    <property type="term" value="P:autophagy"/>
    <property type="evidence" value="ECO:0007669"/>
    <property type="project" value="UniProtKB-KW"/>
</dbReference>
<dbReference type="GO" id="GO:0010507">
    <property type="term" value="P:negative regulation of autophagy"/>
    <property type="evidence" value="ECO:0000315"/>
    <property type="project" value="UniProtKB"/>
</dbReference>
<dbReference type="GO" id="GO:0141014">
    <property type="term" value="P:ribosome hibernation"/>
    <property type="evidence" value="ECO:0000318"/>
    <property type="project" value="GO_Central"/>
</dbReference>
<dbReference type="InterPro" id="IPR024130">
    <property type="entry name" value="DAP1/DAPL1"/>
</dbReference>
<dbReference type="PANTHER" id="PTHR13177">
    <property type="entry name" value="DEATH-ASSOCIATED PROTEIN 1"/>
    <property type="match status" value="1"/>
</dbReference>
<dbReference type="PANTHER" id="PTHR13177:SF3">
    <property type="entry name" value="DEATH-ASSOCIATED PROTEIN 1"/>
    <property type="match status" value="1"/>
</dbReference>
<dbReference type="Pfam" id="PF15228">
    <property type="entry name" value="DAP"/>
    <property type="match status" value="1"/>
</dbReference>
<reference key="1">
    <citation type="journal article" date="1995" name="Genes Dev.">
        <title>Identification of a novel serine/threonine kinase and a novel 15-kD protein as potential mediators of the gamma interferon-induced cell death.</title>
        <authorList>
            <person name="Deiss L.P."/>
            <person name="Feinstein E."/>
            <person name="Berissi H."/>
            <person name="Cohen O."/>
            <person name="Kimchi A."/>
        </authorList>
    </citation>
    <scope>NUCLEOTIDE SEQUENCE [MRNA]</scope>
    <scope>FUNCTION</scope>
</reference>
<reference key="2">
    <citation type="submission" date="2004-06" db="EMBL/GenBank/DDBJ databases">
        <title>Cloning of human full open reading frames in Gateway(TM) system entry vector (pDONR201).</title>
        <authorList>
            <person name="Ebert L."/>
            <person name="Schick M."/>
            <person name="Neubert P."/>
            <person name="Schatten R."/>
            <person name="Henze S."/>
            <person name="Korn B."/>
        </authorList>
    </citation>
    <scope>NUCLEOTIDE SEQUENCE [LARGE SCALE MRNA]</scope>
</reference>
<reference key="3">
    <citation type="submission" date="2003-04" db="EMBL/GenBank/DDBJ databases">
        <authorList>
            <consortium name="NIEHS SNPs program"/>
        </authorList>
    </citation>
    <scope>NUCLEOTIDE SEQUENCE [GENOMIC DNA]</scope>
</reference>
<reference key="4">
    <citation type="journal article" date="2004" name="Genome Res.">
        <title>The status, quality, and expansion of the NIH full-length cDNA project: the Mammalian Gene Collection (MGC).</title>
        <authorList>
            <consortium name="The MGC Project Team"/>
        </authorList>
    </citation>
    <scope>NUCLEOTIDE SEQUENCE [LARGE SCALE MRNA]</scope>
    <source>
        <tissue>Uterus</tissue>
    </source>
</reference>
<reference key="5">
    <citation type="journal article" date="2006" name="J. Proteome Res.">
        <title>Beyond linker histones and high mobility group proteins: global profiling of perchloric acid soluble proteins.</title>
        <authorList>
            <person name="Zougman A."/>
            <person name="Wisniewski J.R."/>
        </authorList>
    </citation>
    <scope>PROTEIN SEQUENCE OF 2-8 AND 41-65</scope>
    <scope>ACETYLATION AT SER-2</scope>
    <scope>PHOSPHORYLATION AT SER-3; SER-49 AND SER-51</scope>
    <scope>IDENTIFICATION BY MASS SPECTROMETRY</scope>
</reference>
<reference key="6">
    <citation type="journal article" date="2006" name="Cell">
        <title>Global, in vivo, and site-specific phosphorylation dynamics in signaling networks.</title>
        <authorList>
            <person name="Olsen J.V."/>
            <person name="Blagoev B."/>
            <person name="Gnad F."/>
            <person name="Macek B."/>
            <person name="Kumar C."/>
            <person name="Mortensen P."/>
            <person name="Mann M."/>
        </authorList>
    </citation>
    <scope>IDENTIFICATION BY MASS SPECTROMETRY [LARGE SCALE ANALYSIS]</scope>
    <source>
        <tissue>Cervix carcinoma</tissue>
    </source>
</reference>
<reference key="7">
    <citation type="journal article" date="2008" name="Proc. Natl. Acad. Sci. U.S.A.">
        <title>A quantitative atlas of mitotic phosphorylation.</title>
        <authorList>
            <person name="Dephoure N."/>
            <person name="Zhou C."/>
            <person name="Villen J."/>
            <person name="Beausoleil S.A."/>
            <person name="Bakalarski C.E."/>
            <person name="Elledge S.J."/>
            <person name="Gygi S.P."/>
        </authorList>
    </citation>
    <scope>PHOSPHORYLATION [LARGE SCALE ANALYSIS] AT SER-49; SER-51 AND SER-91</scope>
    <scope>IDENTIFICATION BY MASS SPECTROMETRY [LARGE SCALE ANALYSIS]</scope>
    <source>
        <tissue>Cervix carcinoma</tissue>
    </source>
</reference>
<reference key="8">
    <citation type="journal article" date="2010" name="Curr. Biol.">
        <title>DAP1, a novel substrate of mTOR, negatively regulates autophagy.</title>
        <authorList>
            <person name="Koren I."/>
            <person name="Reem E."/>
            <person name="Kimchi A."/>
        </authorList>
    </citation>
    <scope>FUNCTION IN AUTOPHAGY</scope>
    <scope>PHOSPHORYLATION AT SER-3 AND SER-51 BY MTOR</scope>
</reference>
<reference key="9">
    <citation type="journal article" date="2010" name="Sci. Signal.">
        <title>Quantitative phosphoproteomics reveals widespread full phosphorylation site occupancy during mitosis.</title>
        <authorList>
            <person name="Olsen J.V."/>
            <person name="Vermeulen M."/>
            <person name="Santamaria A."/>
            <person name="Kumar C."/>
            <person name="Miller M.L."/>
            <person name="Jensen L.J."/>
            <person name="Gnad F."/>
            <person name="Cox J."/>
            <person name="Jensen T.S."/>
            <person name="Nigg E.A."/>
            <person name="Brunak S."/>
            <person name="Mann M."/>
        </authorList>
    </citation>
    <scope>PHOSPHORYLATION [LARGE SCALE ANALYSIS] AT SER-49; SER-51 AND SER-91</scope>
    <scope>IDENTIFICATION BY MASS SPECTROMETRY [LARGE SCALE ANALYSIS]</scope>
    <source>
        <tissue>Cervix carcinoma</tissue>
    </source>
</reference>
<reference key="10">
    <citation type="journal article" date="2011" name="Sci. Signal.">
        <title>System-wide temporal characterization of the proteome and phosphoproteome of human embryonic stem cell differentiation.</title>
        <authorList>
            <person name="Rigbolt K.T."/>
            <person name="Prokhorova T.A."/>
            <person name="Akimov V."/>
            <person name="Henningsen J."/>
            <person name="Johansen P.T."/>
            <person name="Kratchmarova I."/>
            <person name="Kassem M."/>
            <person name="Mann M."/>
            <person name="Olsen J.V."/>
            <person name="Blagoev B."/>
        </authorList>
    </citation>
    <scope>PHOSPHORYLATION [LARGE SCALE ANALYSIS] AT SER-51</scope>
    <scope>IDENTIFICATION BY MASS SPECTROMETRY [LARGE SCALE ANALYSIS]</scope>
</reference>
<reference key="11">
    <citation type="journal article" date="2013" name="J. Proteome Res.">
        <title>Toward a comprehensive characterization of a human cancer cell phosphoproteome.</title>
        <authorList>
            <person name="Zhou H."/>
            <person name="Di Palma S."/>
            <person name="Preisinger C."/>
            <person name="Peng M."/>
            <person name="Polat A.N."/>
            <person name="Heck A.J."/>
            <person name="Mohammed S."/>
        </authorList>
    </citation>
    <scope>IDENTIFICATION BY MASS SPECTROMETRY [LARGE SCALE ANALYSIS]</scope>
    <source>
        <tissue>Cervix carcinoma</tissue>
        <tissue>Erythroleukemia</tissue>
    </source>
</reference>
<reference key="12">
    <citation type="journal article" date="2015" name="Proteomics">
        <title>N-terminome analysis of the human mitochondrial proteome.</title>
        <authorList>
            <person name="Vaca Jacome A.S."/>
            <person name="Rabilloud T."/>
            <person name="Schaeffer-Reiss C."/>
            <person name="Rompais M."/>
            <person name="Ayoub D."/>
            <person name="Lane L."/>
            <person name="Bairoch A."/>
            <person name="Van Dorsselaer A."/>
            <person name="Carapito C."/>
        </authorList>
    </citation>
    <scope>IDENTIFICATION BY MASS SPECTROMETRY [LARGE SCALE ANALYSIS]</scope>
</reference>
<evidence type="ECO:0000250" key="1">
    <source>
        <dbReference type="UniProtKB" id="Q91XC8"/>
    </source>
</evidence>
<evidence type="ECO:0000250" key="2">
    <source>
        <dbReference type="UniProtKB" id="Q9I9N1"/>
    </source>
</evidence>
<evidence type="ECO:0000256" key="3">
    <source>
        <dbReference type="SAM" id="MobiDB-lite"/>
    </source>
</evidence>
<evidence type="ECO:0000269" key="4">
    <source>
    </source>
</evidence>
<evidence type="ECO:0000269" key="5">
    <source>
    </source>
</evidence>
<evidence type="ECO:0000269" key="6">
    <source>
    </source>
</evidence>
<evidence type="ECO:0000303" key="7">
    <source>
    </source>
</evidence>
<evidence type="ECO:0000305" key="8"/>
<evidence type="ECO:0000312" key="9">
    <source>
        <dbReference type="HGNC" id="HGNC:2672"/>
    </source>
</evidence>
<evidence type="ECO:0007744" key="10">
    <source>
    </source>
</evidence>
<evidence type="ECO:0007744" key="11">
    <source>
    </source>
</evidence>
<evidence type="ECO:0007744" key="12">
    <source>
    </source>
</evidence>
<sequence>MSSPPEGKLETKAGHPPAVKAGGMRIVQKHPHTGDTKEEKDKDDQEWESPSPPKPTVFISGVIARGDKDFPPAAAQVAHQKPHASMDKHPSPRTQHIQQPRK</sequence>
<accession>P51397</accession>
<accession>Q6FGC3</accession>
<accession>Q9BUC9</accession>